<organism>
    <name type="scientific">Escherichia coli (strain ATCC 8739 / DSM 1576 / NBRC 3972 / NCIMB 8545 / WDCM 00012 / Crooks)</name>
    <dbReference type="NCBI Taxonomy" id="481805"/>
    <lineage>
        <taxon>Bacteria</taxon>
        <taxon>Pseudomonadati</taxon>
        <taxon>Pseudomonadota</taxon>
        <taxon>Gammaproteobacteria</taxon>
        <taxon>Enterobacterales</taxon>
        <taxon>Enterobacteriaceae</taxon>
        <taxon>Escherichia</taxon>
    </lineage>
</organism>
<sequence length="145" mass="15950">MIALIQRVTRASVTVEGEVTGEIGAGLLVLLGVEKDDDEQKANRLCERVLGYRIFSDAEGKMNLNVQQAGGSVLVVSQFTLAADTERGMRPSFSKGASPDRAEALYDYFVERCRQQEMNTQTGRFAADMQVSLVNDGPVTFWLQV</sequence>
<reference key="1">
    <citation type="submission" date="2008-02" db="EMBL/GenBank/DDBJ databases">
        <title>Complete sequence of Escherichia coli C str. ATCC 8739.</title>
        <authorList>
            <person name="Copeland A."/>
            <person name="Lucas S."/>
            <person name="Lapidus A."/>
            <person name="Glavina del Rio T."/>
            <person name="Dalin E."/>
            <person name="Tice H."/>
            <person name="Bruce D."/>
            <person name="Goodwin L."/>
            <person name="Pitluck S."/>
            <person name="Kiss H."/>
            <person name="Brettin T."/>
            <person name="Detter J.C."/>
            <person name="Han C."/>
            <person name="Kuske C.R."/>
            <person name="Schmutz J."/>
            <person name="Larimer F."/>
            <person name="Land M."/>
            <person name="Hauser L."/>
            <person name="Kyrpides N."/>
            <person name="Mikhailova N."/>
            <person name="Ingram L."/>
            <person name="Richardson P."/>
        </authorList>
    </citation>
    <scope>NUCLEOTIDE SEQUENCE [LARGE SCALE GENOMIC DNA]</scope>
    <source>
        <strain>ATCC 8739 / DSM 1576 / NBRC 3972 / NCIMB 8545 / WDCM 00012 / Crooks</strain>
    </source>
</reference>
<gene>
    <name evidence="1" type="primary">dtd</name>
    <name type="ordered locus">EcolC_4131</name>
</gene>
<proteinExistence type="inferred from homology"/>
<name>DTD_ECOLC</name>
<keyword id="KW-0963">Cytoplasm</keyword>
<keyword id="KW-0378">Hydrolase</keyword>
<keyword id="KW-0694">RNA-binding</keyword>
<keyword id="KW-0820">tRNA-binding</keyword>
<dbReference type="EC" id="3.1.1.96" evidence="1"/>
<dbReference type="EMBL" id="CP000946">
    <property type="protein sequence ID" value="ACA79728.1"/>
    <property type="molecule type" value="Genomic_DNA"/>
</dbReference>
<dbReference type="RefSeq" id="WP_000560983.1">
    <property type="nucleotide sequence ID" value="NZ_MTFT01000008.1"/>
</dbReference>
<dbReference type="SMR" id="B1IVJ1"/>
<dbReference type="GeneID" id="93778051"/>
<dbReference type="KEGG" id="ecl:EcolC_4131"/>
<dbReference type="HOGENOM" id="CLU_076901_1_0_6"/>
<dbReference type="GO" id="GO:0005737">
    <property type="term" value="C:cytoplasm"/>
    <property type="evidence" value="ECO:0007669"/>
    <property type="project" value="UniProtKB-SubCell"/>
</dbReference>
<dbReference type="GO" id="GO:0051500">
    <property type="term" value="F:D-tyrosyl-tRNA(Tyr) deacylase activity"/>
    <property type="evidence" value="ECO:0007669"/>
    <property type="project" value="TreeGrafter"/>
</dbReference>
<dbReference type="GO" id="GO:0106026">
    <property type="term" value="F:Gly-tRNA(Ala) deacylase activity"/>
    <property type="evidence" value="ECO:0007669"/>
    <property type="project" value="UniProtKB-UniRule"/>
</dbReference>
<dbReference type="GO" id="GO:0043908">
    <property type="term" value="F:Ser(Gly)-tRNA(Ala) hydrolase activity"/>
    <property type="evidence" value="ECO:0007669"/>
    <property type="project" value="UniProtKB-UniRule"/>
</dbReference>
<dbReference type="GO" id="GO:0000049">
    <property type="term" value="F:tRNA binding"/>
    <property type="evidence" value="ECO:0007669"/>
    <property type="project" value="UniProtKB-UniRule"/>
</dbReference>
<dbReference type="GO" id="GO:0019478">
    <property type="term" value="P:D-amino acid catabolic process"/>
    <property type="evidence" value="ECO:0007669"/>
    <property type="project" value="UniProtKB-UniRule"/>
</dbReference>
<dbReference type="CDD" id="cd00563">
    <property type="entry name" value="Dtyr_deacylase"/>
    <property type="match status" value="1"/>
</dbReference>
<dbReference type="FunFam" id="3.50.80.10:FF:000001">
    <property type="entry name" value="D-aminoacyl-tRNA deacylase"/>
    <property type="match status" value="1"/>
</dbReference>
<dbReference type="Gene3D" id="3.50.80.10">
    <property type="entry name" value="D-tyrosyl-tRNA(Tyr) deacylase"/>
    <property type="match status" value="1"/>
</dbReference>
<dbReference type="HAMAP" id="MF_00518">
    <property type="entry name" value="Deacylase_Dtd"/>
    <property type="match status" value="1"/>
</dbReference>
<dbReference type="InterPro" id="IPR003732">
    <property type="entry name" value="Daa-tRNA_deacyls_DTD"/>
</dbReference>
<dbReference type="InterPro" id="IPR023509">
    <property type="entry name" value="DTD-like_sf"/>
</dbReference>
<dbReference type="NCBIfam" id="TIGR00256">
    <property type="entry name" value="D-aminoacyl-tRNA deacylase"/>
    <property type="match status" value="1"/>
</dbReference>
<dbReference type="PANTHER" id="PTHR10472:SF5">
    <property type="entry name" value="D-AMINOACYL-TRNA DEACYLASE 1"/>
    <property type="match status" value="1"/>
</dbReference>
<dbReference type="PANTHER" id="PTHR10472">
    <property type="entry name" value="D-TYROSYL-TRNA TYR DEACYLASE"/>
    <property type="match status" value="1"/>
</dbReference>
<dbReference type="Pfam" id="PF02580">
    <property type="entry name" value="Tyr_Deacylase"/>
    <property type="match status" value="1"/>
</dbReference>
<dbReference type="SUPFAM" id="SSF69500">
    <property type="entry name" value="DTD-like"/>
    <property type="match status" value="1"/>
</dbReference>
<evidence type="ECO:0000255" key="1">
    <source>
        <dbReference type="HAMAP-Rule" id="MF_00518"/>
    </source>
</evidence>
<accession>B1IVJ1</accession>
<comment type="function">
    <text evidence="1">An aminoacyl-tRNA editing enzyme that deacylates mischarged D-aminoacyl-tRNAs. Also deacylates mischarged glycyl-tRNA(Ala), protecting cells against glycine mischarging by AlaRS. Acts via tRNA-based rather than protein-based catalysis; rejects L-amino acids rather than detecting D-amino acids in the active site. By recycling D-aminoacyl-tRNA to D-amino acids and free tRNA molecules, this enzyme counteracts the toxicity associated with the formation of D-aminoacyl-tRNA entities in vivo and helps enforce protein L-homochirality.</text>
</comment>
<comment type="catalytic activity">
    <reaction evidence="1">
        <text>glycyl-tRNA(Ala) + H2O = tRNA(Ala) + glycine + H(+)</text>
        <dbReference type="Rhea" id="RHEA:53744"/>
        <dbReference type="Rhea" id="RHEA-COMP:9657"/>
        <dbReference type="Rhea" id="RHEA-COMP:13640"/>
        <dbReference type="ChEBI" id="CHEBI:15377"/>
        <dbReference type="ChEBI" id="CHEBI:15378"/>
        <dbReference type="ChEBI" id="CHEBI:57305"/>
        <dbReference type="ChEBI" id="CHEBI:78442"/>
        <dbReference type="ChEBI" id="CHEBI:78522"/>
        <dbReference type="EC" id="3.1.1.96"/>
    </reaction>
</comment>
<comment type="catalytic activity">
    <reaction evidence="1">
        <text>a D-aminoacyl-tRNA + H2O = a tRNA + a D-alpha-amino acid + H(+)</text>
        <dbReference type="Rhea" id="RHEA:13953"/>
        <dbReference type="Rhea" id="RHEA-COMP:10123"/>
        <dbReference type="Rhea" id="RHEA-COMP:10124"/>
        <dbReference type="ChEBI" id="CHEBI:15377"/>
        <dbReference type="ChEBI" id="CHEBI:15378"/>
        <dbReference type="ChEBI" id="CHEBI:59871"/>
        <dbReference type="ChEBI" id="CHEBI:78442"/>
        <dbReference type="ChEBI" id="CHEBI:79333"/>
        <dbReference type="EC" id="3.1.1.96"/>
    </reaction>
</comment>
<comment type="subunit">
    <text evidence="1">Homodimer.</text>
</comment>
<comment type="subcellular location">
    <subcellularLocation>
        <location evidence="1">Cytoplasm</location>
    </subcellularLocation>
</comment>
<comment type="domain">
    <text evidence="1">A Gly-cisPro motif from one monomer fits into the active site of the other monomer to allow specific chiral rejection of L-amino acids.</text>
</comment>
<comment type="similarity">
    <text evidence="1">Belongs to the DTD family.</text>
</comment>
<protein>
    <recommendedName>
        <fullName evidence="1">D-aminoacyl-tRNA deacylase</fullName>
        <shortName evidence="1">DTD</shortName>
        <ecNumber evidence="1">3.1.1.96</ecNumber>
    </recommendedName>
    <alternativeName>
        <fullName evidence="1">Gly-tRNA(Ala) deacylase</fullName>
    </alternativeName>
</protein>
<feature type="chain" id="PRO_1000081651" description="D-aminoacyl-tRNA deacylase">
    <location>
        <begin position="1"/>
        <end position="145"/>
    </location>
</feature>
<feature type="short sequence motif" description="Gly-cisPro motif, important for rejection of L-amino acids" evidence="1">
    <location>
        <begin position="137"/>
        <end position="138"/>
    </location>
</feature>